<feature type="chain" id="PRO_1000166163" description="Large ribosomal subunit protein bL25">
    <location>
        <begin position="1"/>
        <end position="207"/>
    </location>
</feature>
<feature type="region of interest" description="Disordered" evidence="2">
    <location>
        <begin position="171"/>
        <end position="207"/>
    </location>
</feature>
<feature type="compositionally biased region" description="Low complexity" evidence="2">
    <location>
        <begin position="184"/>
        <end position="207"/>
    </location>
</feature>
<comment type="function">
    <text evidence="1">This is one of the proteins that binds to the 5S RNA in the ribosome where it forms part of the central protuberance.</text>
</comment>
<comment type="subunit">
    <text evidence="1">Part of the 50S ribosomal subunit; part of the 5S rRNA/L5/L18/L25 subcomplex. Contacts the 5S rRNA. Binds to the 5S rRNA independently of L5 and L18.</text>
</comment>
<comment type="similarity">
    <text evidence="1">Belongs to the bacterial ribosomal protein bL25 family. CTC subfamily.</text>
</comment>
<proteinExistence type="inferred from homology"/>
<keyword id="KW-0687">Ribonucleoprotein</keyword>
<keyword id="KW-0689">Ribosomal protein</keyword>
<keyword id="KW-0694">RNA-binding</keyword>
<keyword id="KW-0699">rRNA-binding</keyword>
<reference key="1">
    <citation type="journal article" date="2008" name="Proc. Natl. Acad. Sci. U.S.A.">
        <title>The genome sequence of Bifidobacterium longum subsp. infantis reveals adaptations for milk utilization within the infant microbiome.</title>
        <authorList>
            <person name="Sela D.A."/>
            <person name="Chapman J."/>
            <person name="Adeuya A."/>
            <person name="Kim J.H."/>
            <person name="Chen F."/>
            <person name="Whitehead T.R."/>
            <person name="Lapidus A."/>
            <person name="Rokhsar D.S."/>
            <person name="Lebrilla C.B."/>
            <person name="German J.B."/>
            <person name="Price N.P."/>
            <person name="Richardson P.M."/>
            <person name="Mills D.A."/>
        </authorList>
    </citation>
    <scope>NUCLEOTIDE SEQUENCE [LARGE SCALE GENOMIC DNA]</scope>
    <source>
        <strain>ATCC 15697 / DSM 20088 / JCM 1222 / NCTC 11817 / S12</strain>
    </source>
</reference>
<reference key="2">
    <citation type="journal article" date="2011" name="Nature">
        <title>Bifidobacteria can protect from enteropathogenic infection through production of acetate.</title>
        <authorList>
            <person name="Fukuda S."/>
            <person name="Toh H."/>
            <person name="Hase K."/>
            <person name="Oshima K."/>
            <person name="Nakanishi Y."/>
            <person name="Yoshimura K."/>
            <person name="Tobe T."/>
            <person name="Clarke J.M."/>
            <person name="Topping D.L."/>
            <person name="Suzuki T."/>
            <person name="Taylor T.D."/>
            <person name="Itoh K."/>
            <person name="Kikuchi J."/>
            <person name="Morita H."/>
            <person name="Hattori M."/>
            <person name="Ohno H."/>
        </authorList>
    </citation>
    <scope>NUCLEOTIDE SEQUENCE [LARGE SCALE GENOMIC DNA]</scope>
    <source>
        <strain>ATCC 15697 / DSM 20088 / JCM 1222 / NCTC 11817 / S12</strain>
    </source>
</reference>
<dbReference type="EMBL" id="CP001095">
    <property type="protein sequence ID" value="ACJ52654.1"/>
    <property type="molecule type" value="Genomic_DNA"/>
</dbReference>
<dbReference type="EMBL" id="AP010889">
    <property type="protein sequence ID" value="BAJ69212.1"/>
    <property type="molecule type" value="Genomic_DNA"/>
</dbReference>
<dbReference type="RefSeq" id="WP_012577892.1">
    <property type="nucleotide sequence ID" value="NZ_JDTT01000018.1"/>
</dbReference>
<dbReference type="SMR" id="B7GS74"/>
<dbReference type="KEGG" id="bln:Blon_1575"/>
<dbReference type="KEGG" id="blon:BLIJ_1630"/>
<dbReference type="PATRIC" id="fig|391904.8.peg.1644"/>
<dbReference type="HOGENOM" id="CLU_075939_1_0_11"/>
<dbReference type="Proteomes" id="UP000001360">
    <property type="component" value="Chromosome"/>
</dbReference>
<dbReference type="GO" id="GO:0022625">
    <property type="term" value="C:cytosolic large ribosomal subunit"/>
    <property type="evidence" value="ECO:0007669"/>
    <property type="project" value="TreeGrafter"/>
</dbReference>
<dbReference type="GO" id="GO:0008097">
    <property type="term" value="F:5S rRNA binding"/>
    <property type="evidence" value="ECO:0007669"/>
    <property type="project" value="InterPro"/>
</dbReference>
<dbReference type="GO" id="GO:0003735">
    <property type="term" value="F:structural constituent of ribosome"/>
    <property type="evidence" value="ECO:0007669"/>
    <property type="project" value="InterPro"/>
</dbReference>
<dbReference type="GO" id="GO:0006412">
    <property type="term" value="P:translation"/>
    <property type="evidence" value="ECO:0007669"/>
    <property type="project" value="UniProtKB-UniRule"/>
</dbReference>
<dbReference type="CDD" id="cd00495">
    <property type="entry name" value="Ribosomal_L25_TL5_CTC"/>
    <property type="match status" value="1"/>
</dbReference>
<dbReference type="Gene3D" id="2.170.120.20">
    <property type="entry name" value="Ribosomal protein L25, beta domain"/>
    <property type="match status" value="1"/>
</dbReference>
<dbReference type="Gene3D" id="2.40.240.10">
    <property type="entry name" value="Ribosomal Protein L25, Chain P"/>
    <property type="match status" value="1"/>
</dbReference>
<dbReference type="HAMAP" id="MF_01334">
    <property type="entry name" value="Ribosomal_bL25_CTC"/>
    <property type="match status" value="1"/>
</dbReference>
<dbReference type="InterPro" id="IPR020056">
    <property type="entry name" value="Rbsml_bL25/Gln-tRNA_synth_N"/>
</dbReference>
<dbReference type="InterPro" id="IPR011035">
    <property type="entry name" value="Ribosomal_bL25/Gln-tRNA_synth"/>
</dbReference>
<dbReference type="InterPro" id="IPR020057">
    <property type="entry name" value="Ribosomal_bL25_b-dom"/>
</dbReference>
<dbReference type="InterPro" id="IPR037121">
    <property type="entry name" value="Ribosomal_bL25_C"/>
</dbReference>
<dbReference type="InterPro" id="IPR001021">
    <property type="entry name" value="Ribosomal_bL25_long"/>
</dbReference>
<dbReference type="InterPro" id="IPR029751">
    <property type="entry name" value="Ribosomal_L25_dom"/>
</dbReference>
<dbReference type="InterPro" id="IPR020930">
    <property type="entry name" value="Ribosomal_uL5_bac-type"/>
</dbReference>
<dbReference type="NCBIfam" id="TIGR00731">
    <property type="entry name" value="bL25_bact_ctc"/>
    <property type="match status" value="1"/>
</dbReference>
<dbReference type="NCBIfam" id="NF004131">
    <property type="entry name" value="PRK05618.2-1"/>
    <property type="match status" value="1"/>
</dbReference>
<dbReference type="PANTHER" id="PTHR33284">
    <property type="entry name" value="RIBOSOMAL PROTEIN L25/GLN-TRNA SYNTHETASE, ANTI-CODON-BINDING DOMAIN-CONTAINING PROTEIN"/>
    <property type="match status" value="1"/>
</dbReference>
<dbReference type="PANTHER" id="PTHR33284:SF1">
    <property type="entry name" value="RIBOSOMAL PROTEIN L25_GLN-TRNA SYNTHETASE, ANTI-CODON-BINDING DOMAIN-CONTAINING PROTEIN"/>
    <property type="match status" value="1"/>
</dbReference>
<dbReference type="Pfam" id="PF01386">
    <property type="entry name" value="Ribosomal_L25p"/>
    <property type="match status" value="1"/>
</dbReference>
<dbReference type="Pfam" id="PF14693">
    <property type="entry name" value="Ribosomal_TL5_C"/>
    <property type="match status" value="1"/>
</dbReference>
<dbReference type="SUPFAM" id="SSF50715">
    <property type="entry name" value="Ribosomal protein L25-like"/>
    <property type="match status" value="1"/>
</dbReference>
<gene>
    <name evidence="1" type="primary">rplY</name>
    <name evidence="1" type="synonym">ctc</name>
    <name type="ordered locus">Blon_1575</name>
    <name type="ordered locus">BLIJ_1630</name>
</gene>
<sequence length="207" mass="21988">MATTIKLEGEARSEFGKGVARRLRVANKIPATIYAGGEEPAFVTLPMRETTLALRHTNALFTIAFDGNTKMAVVKDVQKNPVKRIIEHIDFLEVKAGEKIDVEVPVFVEGTPKGAAVAFVDIQELKVRADVTNLPEKIVVSVEGLTDGTKVFAKDVVLPEGVELDIEDPEESVVTVEVPEDATESTTAPEAAAAPADAAAAPAADAK</sequence>
<accession>B7GS74</accession>
<accession>E8MKY5</accession>
<evidence type="ECO:0000255" key="1">
    <source>
        <dbReference type="HAMAP-Rule" id="MF_01334"/>
    </source>
</evidence>
<evidence type="ECO:0000256" key="2">
    <source>
        <dbReference type="SAM" id="MobiDB-lite"/>
    </source>
</evidence>
<evidence type="ECO:0000305" key="3"/>
<organism>
    <name type="scientific">Bifidobacterium longum subsp. infantis (strain ATCC 15697 / DSM 20088 / JCM 1222 / NCTC 11817 / S12)</name>
    <dbReference type="NCBI Taxonomy" id="391904"/>
    <lineage>
        <taxon>Bacteria</taxon>
        <taxon>Bacillati</taxon>
        <taxon>Actinomycetota</taxon>
        <taxon>Actinomycetes</taxon>
        <taxon>Bifidobacteriales</taxon>
        <taxon>Bifidobacteriaceae</taxon>
        <taxon>Bifidobacterium</taxon>
    </lineage>
</organism>
<protein>
    <recommendedName>
        <fullName evidence="1">Large ribosomal subunit protein bL25</fullName>
    </recommendedName>
    <alternativeName>
        <fullName evidence="3">50S ribosomal protein L25</fullName>
    </alternativeName>
    <alternativeName>
        <fullName evidence="1">General stress protein CTC</fullName>
    </alternativeName>
</protein>
<name>RL25_BIFLS</name>